<feature type="initiator methionine" description="Removed" evidence="1">
    <location>
        <position position="1"/>
    </location>
</feature>
<feature type="chain" id="PRO_0000244868" description="Histone H2B 3">
    <location>
        <begin position="2"/>
        <end position="126"/>
    </location>
</feature>
<feature type="region of interest" description="Disordered" evidence="6">
    <location>
        <begin position="1"/>
        <end position="34"/>
    </location>
</feature>
<feature type="compositionally biased region" description="Low complexity" evidence="6">
    <location>
        <begin position="1"/>
        <end position="12"/>
    </location>
</feature>
<feature type="compositionally biased region" description="Basic residues" evidence="6">
    <location>
        <begin position="13"/>
        <end position="34"/>
    </location>
</feature>
<feature type="modified residue" description="N6-acetyllysine" evidence="3">
    <location>
        <position position="6"/>
    </location>
</feature>
<feature type="modified residue" description="N6-acetyllysine" evidence="3">
    <location>
        <position position="13"/>
    </location>
</feature>
<feature type="modified residue" description="Phosphoserine" evidence="2">
    <location>
        <position position="15"/>
    </location>
</feature>
<feature type="modified residue" description="N6-acetyllysine" evidence="3">
    <location>
        <position position="16"/>
    </location>
</feature>
<feature type="modified residue" description="N6-acetyllysine" evidence="3">
    <location>
        <position position="21"/>
    </location>
</feature>
<feature type="glycosylation site" description="O-linked (GlcNAc) serine" evidence="5">
    <location>
        <position position="113"/>
    </location>
</feature>
<feature type="cross-link" description="Glycyl lysine isopeptide (Lys-Gly) (interchain with G-Cter in ubiquitin)" evidence="3">
    <location>
        <position position="121"/>
    </location>
</feature>
<dbReference type="EMBL" id="BX120005">
    <property type="protein sequence ID" value="CAK03634.1"/>
    <property type="molecule type" value="Genomic_DNA"/>
</dbReference>
<dbReference type="EMBL" id="BC059463">
    <property type="protein sequence ID" value="AAH59463.1"/>
    <property type="molecule type" value="mRNA"/>
</dbReference>
<dbReference type="RefSeq" id="NP_956411.1">
    <property type="nucleotide sequence ID" value="NM_200117.1"/>
</dbReference>
<dbReference type="SMR" id="Q6PC60"/>
<dbReference type="FunCoup" id="Q6PC60">
    <property type="interactions" value="1299"/>
</dbReference>
<dbReference type="STRING" id="7955.ENSDARP00000055912"/>
<dbReference type="GlyCosmos" id="Q6PC60">
    <property type="glycosylation" value="1 site, No reported glycans"/>
</dbReference>
<dbReference type="PaxDb" id="7955-ENSDARP00000055912"/>
<dbReference type="Ensembl" id="ENSDART00000055913">
    <property type="protein sequence ID" value="ENSDARP00000055912"/>
    <property type="gene ID" value="ENSDARG00000068996"/>
</dbReference>
<dbReference type="Ensembl" id="ENSDART00000186233">
    <property type="protein sequence ID" value="ENSDARP00000156959"/>
    <property type="gene ID" value="ENSDARG00000112150"/>
</dbReference>
<dbReference type="GeneID" id="386920"/>
<dbReference type="KEGG" id="dre:386920"/>
<dbReference type="AGR" id="ZFIN:ZDB-GENE-031118-36"/>
<dbReference type="CTD" id="386920"/>
<dbReference type="ZFIN" id="ZDB-GENE-031118-36">
    <property type="gene designation" value="hist2h2l"/>
</dbReference>
<dbReference type="eggNOG" id="KOG1744">
    <property type="taxonomic scope" value="Eukaryota"/>
</dbReference>
<dbReference type="HOGENOM" id="CLU_075666_2_1_1"/>
<dbReference type="InParanoid" id="Q6PC60"/>
<dbReference type="OMA" id="FCPFAIR"/>
<dbReference type="OrthoDB" id="10036053at2759"/>
<dbReference type="PhylomeDB" id="Q6PC60"/>
<dbReference type="TreeFam" id="TF300212"/>
<dbReference type="Reactome" id="R-DRE-212300">
    <property type="pathway name" value="PRC2 methylates histones and DNA"/>
</dbReference>
<dbReference type="Reactome" id="R-DRE-2299718">
    <property type="pathway name" value="Condensation of Prophase Chromosomes"/>
</dbReference>
<dbReference type="Reactome" id="R-DRE-2559580">
    <property type="pathway name" value="Oxidative Stress Induced Senescence"/>
</dbReference>
<dbReference type="Reactome" id="R-DRE-3214815">
    <property type="pathway name" value="HDACs deacetylate histones"/>
</dbReference>
<dbReference type="Reactome" id="R-DRE-427413">
    <property type="pathway name" value="NoRC negatively regulates rRNA expression"/>
</dbReference>
<dbReference type="Reactome" id="R-DRE-5625886">
    <property type="pathway name" value="Activated PKN1 stimulates transcription of AR (androgen receptor) regulated genes KLK2 and KLK3"/>
</dbReference>
<dbReference type="Reactome" id="R-DRE-5689880">
    <property type="pathway name" value="Ub-specific processing proteases"/>
</dbReference>
<dbReference type="Reactome" id="R-DRE-73728">
    <property type="pathway name" value="RNA Polymerase I Promoter Opening"/>
</dbReference>
<dbReference type="Reactome" id="R-DRE-8936459">
    <property type="pathway name" value="RUNX1 regulates genes involved in megakaryocyte differentiation and platelet function"/>
</dbReference>
<dbReference type="Reactome" id="R-DRE-9018519">
    <property type="pathway name" value="Estrogen-dependent gene expression"/>
</dbReference>
<dbReference type="Reactome" id="R-DRE-9841922">
    <property type="pathway name" value="MLL4 and MLL3 complexes regulate expression of PPARG target genes in adipogenesis and hepatic steatosis"/>
</dbReference>
<dbReference type="Reactome" id="R-DRE-9843940">
    <property type="pathway name" value="Regulation of endogenous retroelements by KRAB-ZFP proteins"/>
</dbReference>
<dbReference type="Reactome" id="R-DRE-9843970">
    <property type="pathway name" value="Regulation of endogenous retroelements by the Human Silencing Hub (HUSH) complex"/>
</dbReference>
<dbReference type="PRO" id="PR:Q6PC60"/>
<dbReference type="Proteomes" id="UP000000437">
    <property type="component" value="Alternate scaffold 10"/>
</dbReference>
<dbReference type="Proteomes" id="UP000000437">
    <property type="component" value="Chromosome 10"/>
</dbReference>
<dbReference type="Bgee" id="ENSDARG00000068996">
    <property type="expression patterns" value="Expressed in brain and 27 other cell types or tissues"/>
</dbReference>
<dbReference type="GO" id="GO:0000785">
    <property type="term" value="C:chromatin"/>
    <property type="evidence" value="ECO:0000314"/>
    <property type="project" value="ZFIN"/>
</dbReference>
<dbReference type="GO" id="GO:0000786">
    <property type="term" value="C:nucleosome"/>
    <property type="evidence" value="ECO:0007669"/>
    <property type="project" value="UniProtKB-KW"/>
</dbReference>
<dbReference type="GO" id="GO:0005634">
    <property type="term" value="C:nucleus"/>
    <property type="evidence" value="ECO:0007669"/>
    <property type="project" value="UniProtKB-SubCell"/>
</dbReference>
<dbReference type="GO" id="GO:0003677">
    <property type="term" value="F:DNA binding"/>
    <property type="evidence" value="ECO:0007669"/>
    <property type="project" value="UniProtKB-KW"/>
</dbReference>
<dbReference type="GO" id="GO:0046982">
    <property type="term" value="F:protein heterodimerization activity"/>
    <property type="evidence" value="ECO:0007669"/>
    <property type="project" value="InterPro"/>
</dbReference>
<dbReference type="GO" id="GO:0030527">
    <property type="term" value="F:structural constituent of chromatin"/>
    <property type="evidence" value="ECO:0007669"/>
    <property type="project" value="InterPro"/>
</dbReference>
<dbReference type="CDD" id="cd22910">
    <property type="entry name" value="HFD_H2B"/>
    <property type="match status" value="1"/>
</dbReference>
<dbReference type="FunFam" id="1.10.20.10:FF:000003">
    <property type="entry name" value="Histone H2B"/>
    <property type="match status" value="1"/>
</dbReference>
<dbReference type="Gene3D" id="1.10.20.10">
    <property type="entry name" value="Histone, subunit A"/>
    <property type="match status" value="1"/>
</dbReference>
<dbReference type="InterPro" id="IPR009072">
    <property type="entry name" value="Histone-fold"/>
</dbReference>
<dbReference type="InterPro" id="IPR007125">
    <property type="entry name" value="Histone_H2A/H2B/H3"/>
</dbReference>
<dbReference type="InterPro" id="IPR000558">
    <property type="entry name" value="Histone_H2B"/>
</dbReference>
<dbReference type="InterPro" id="IPR055333">
    <property type="entry name" value="HISTONE_H2B_site"/>
</dbReference>
<dbReference type="PANTHER" id="PTHR23428">
    <property type="entry name" value="HISTONE H2B"/>
    <property type="match status" value="1"/>
</dbReference>
<dbReference type="Pfam" id="PF00125">
    <property type="entry name" value="Histone"/>
    <property type="match status" value="1"/>
</dbReference>
<dbReference type="PRINTS" id="PR00621">
    <property type="entry name" value="HISTONEH2B"/>
</dbReference>
<dbReference type="SMART" id="SM00427">
    <property type="entry name" value="H2B"/>
    <property type="match status" value="1"/>
</dbReference>
<dbReference type="SUPFAM" id="SSF47113">
    <property type="entry name" value="Histone-fold"/>
    <property type="match status" value="1"/>
</dbReference>
<dbReference type="PROSITE" id="PS00357">
    <property type="entry name" value="HISTONE_H2B"/>
    <property type="match status" value="1"/>
</dbReference>
<comment type="function">
    <text>Core component of nucleosome. Nucleosomes wrap and compact DNA into chromatin, limiting DNA accessibility to the cellular machineries which require DNA as a template. Histones thereby play a central role in transcription regulation, DNA repair, DNA replication and chromosomal stability. DNA accessibility is regulated via a complex set of post-translational modifications of histones, also called histone code, and nucleosome remodeling.</text>
</comment>
<comment type="subunit">
    <text>The nucleosome is a histone octamer containing two molecules each of H2A, H2B, H3 and H4 assembled in one H3-H4 heterotetramer and two H2A-H2B heterodimers. The octamer wraps approximately 147 bp of DNA.</text>
</comment>
<comment type="subcellular location">
    <subcellularLocation>
        <location>Nucleus</location>
    </subcellularLocation>
    <subcellularLocation>
        <location>Chromosome</location>
    </subcellularLocation>
</comment>
<comment type="PTM">
    <text evidence="4">Monoubiquitination of Lys-121 by the BRE1 gives a specific tag for epigenetic transcriptional activation and is also prerequisite for histone H3 'Lys-4' and 'Lys-79' methylation.</text>
</comment>
<comment type="PTM">
    <text evidence="2">Phosphorylated on Ser-15 during apoptosis; which facilitates apoptotic chromatin condensation.</text>
</comment>
<comment type="PTM">
    <text evidence="5">GlcNAcylation at Ser-113 promotes monoubiquitination of Lys-121. It fluctuates in response to extracellular glucose, and associates with transcribed genes (By similarity).</text>
</comment>
<comment type="similarity">
    <text evidence="7">Belongs to the histone H2B family.</text>
</comment>
<proteinExistence type="evidence at transcript level"/>
<sequence length="126" mass="13948">MPEPAKSAPAPKKGSKKAVTKTQKKGDKKRRKTRKESYAIYVYKVLKQVHPDTGISSKAMGIMNSFVNDIFERIAGEASRLAHYNKRSTITSREIQTAVRLLLPGELAKHAVSEGTKAVTKYTSSK</sequence>
<name>H2B3_DANRE</name>
<keyword id="KW-0007">Acetylation</keyword>
<keyword id="KW-0158">Chromosome</keyword>
<keyword id="KW-0238">DNA-binding</keyword>
<keyword id="KW-0325">Glycoprotein</keyword>
<keyword id="KW-1017">Isopeptide bond</keyword>
<keyword id="KW-0544">Nucleosome core</keyword>
<keyword id="KW-0539">Nucleus</keyword>
<keyword id="KW-0597">Phosphoprotein</keyword>
<keyword id="KW-1185">Reference proteome</keyword>
<keyword id="KW-0832">Ubl conjugation</keyword>
<accession>Q6PC60</accession>
<evidence type="ECO:0000250" key="1"/>
<evidence type="ECO:0000250" key="2">
    <source>
        <dbReference type="UniProtKB" id="P06900"/>
    </source>
</evidence>
<evidence type="ECO:0000250" key="3">
    <source>
        <dbReference type="UniProtKB" id="P0C1H4"/>
    </source>
</evidence>
<evidence type="ECO:0000250" key="4">
    <source>
        <dbReference type="UniProtKB" id="P33778"/>
    </source>
</evidence>
<evidence type="ECO:0000250" key="5">
    <source>
        <dbReference type="UniProtKB" id="P62807"/>
    </source>
</evidence>
<evidence type="ECO:0000256" key="6">
    <source>
        <dbReference type="SAM" id="MobiDB-lite"/>
    </source>
</evidence>
<evidence type="ECO:0000305" key="7"/>
<protein>
    <recommendedName>
        <fullName>Histone H2B 3</fullName>
    </recommendedName>
</protein>
<organism>
    <name type="scientific">Danio rerio</name>
    <name type="common">Zebrafish</name>
    <name type="synonym">Brachydanio rerio</name>
    <dbReference type="NCBI Taxonomy" id="7955"/>
    <lineage>
        <taxon>Eukaryota</taxon>
        <taxon>Metazoa</taxon>
        <taxon>Chordata</taxon>
        <taxon>Craniata</taxon>
        <taxon>Vertebrata</taxon>
        <taxon>Euteleostomi</taxon>
        <taxon>Actinopterygii</taxon>
        <taxon>Neopterygii</taxon>
        <taxon>Teleostei</taxon>
        <taxon>Ostariophysi</taxon>
        <taxon>Cypriniformes</taxon>
        <taxon>Danionidae</taxon>
        <taxon>Danioninae</taxon>
        <taxon>Danio</taxon>
    </lineage>
</organism>
<gene>
    <name type="primary">hist2h2l</name>
    <name type="ORF">zgc:73093</name>
</gene>
<reference key="1">
    <citation type="journal article" date="2013" name="Nature">
        <title>The zebrafish reference genome sequence and its relationship to the human genome.</title>
        <authorList>
            <person name="Howe K."/>
            <person name="Clark M.D."/>
            <person name="Torroja C.F."/>
            <person name="Torrance J."/>
            <person name="Berthelot C."/>
            <person name="Muffato M."/>
            <person name="Collins J.E."/>
            <person name="Humphray S."/>
            <person name="McLaren K."/>
            <person name="Matthews L."/>
            <person name="McLaren S."/>
            <person name="Sealy I."/>
            <person name="Caccamo M."/>
            <person name="Churcher C."/>
            <person name="Scott C."/>
            <person name="Barrett J.C."/>
            <person name="Koch R."/>
            <person name="Rauch G.J."/>
            <person name="White S."/>
            <person name="Chow W."/>
            <person name="Kilian B."/>
            <person name="Quintais L.T."/>
            <person name="Guerra-Assuncao J.A."/>
            <person name="Zhou Y."/>
            <person name="Gu Y."/>
            <person name="Yen J."/>
            <person name="Vogel J.H."/>
            <person name="Eyre T."/>
            <person name="Redmond S."/>
            <person name="Banerjee R."/>
            <person name="Chi J."/>
            <person name="Fu B."/>
            <person name="Langley E."/>
            <person name="Maguire S.F."/>
            <person name="Laird G.K."/>
            <person name="Lloyd D."/>
            <person name="Kenyon E."/>
            <person name="Donaldson S."/>
            <person name="Sehra H."/>
            <person name="Almeida-King J."/>
            <person name="Loveland J."/>
            <person name="Trevanion S."/>
            <person name="Jones M."/>
            <person name="Quail M."/>
            <person name="Willey D."/>
            <person name="Hunt A."/>
            <person name="Burton J."/>
            <person name="Sims S."/>
            <person name="McLay K."/>
            <person name="Plumb B."/>
            <person name="Davis J."/>
            <person name="Clee C."/>
            <person name="Oliver K."/>
            <person name="Clark R."/>
            <person name="Riddle C."/>
            <person name="Elliot D."/>
            <person name="Threadgold G."/>
            <person name="Harden G."/>
            <person name="Ware D."/>
            <person name="Begum S."/>
            <person name="Mortimore B."/>
            <person name="Kerry G."/>
            <person name="Heath P."/>
            <person name="Phillimore B."/>
            <person name="Tracey A."/>
            <person name="Corby N."/>
            <person name="Dunn M."/>
            <person name="Johnson C."/>
            <person name="Wood J."/>
            <person name="Clark S."/>
            <person name="Pelan S."/>
            <person name="Griffiths G."/>
            <person name="Smith M."/>
            <person name="Glithero R."/>
            <person name="Howden P."/>
            <person name="Barker N."/>
            <person name="Lloyd C."/>
            <person name="Stevens C."/>
            <person name="Harley J."/>
            <person name="Holt K."/>
            <person name="Panagiotidis G."/>
            <person name="Lovell J."/>
            <person name="Beasley H."/>
            <person name="Henderson C."/>
            <person name="Gordon D."/>
            <person name="Auger K."/>
            <person name="Wright D."/>
            <person name="Collins J."/>
            <person name="Raisen C."/>
            <person name="Dyer L."/>
            <person name="Leung K."/>
            <person name="Robertson L."/>
            <person name="Ambridge K."/>
            <person name="Leongamornlert D."/>
            <person name="McGuire S."/>
            <person name="Gilderthorp R."/>
            <person name="Griffiths C."/>
            <person name="Manthravadi D."/>
            <person name="Nichol S."/>
            <person name="Barker G."/>
            <person name="Whitehead S."/>
            <person name="Kay M."/>
            <person name="Brown J."/>
            <person name="Murnane C."/>
            <person name="Gray E."/>
            <person name="Humphries M."/>
            <person name="Sycamore N."/>
            <person name="Barker D."/>
            <person name="Saunders D."/>
            <person name="Wallis J."/>
            <person name="Babbage A."/>
            <person name="Hammond S."/>
            <person name="Mashreghi-Mohammadi M."/>
            <person name="Barr L."/>
            <person name="Martin S."/>
            <person name="Wray P."/>
            <person name="Ellington A."/>
            <person name="Matthews N."/>
            <person name="Ellwood M."/>
            <person name="Woodmansey R."/>
            <person name="Clark G."/>
            <person name="Cooper J."/>
            <person name="Tromans A."/>
            <person name="Grafham D."/>
            <person name="Skuce C."/>
            <person name="Pandian R."/>
            <person name="Andrews R."/>
            <person name="Harrison E."/>
            <person name="Kimberley A."/>
            <person name="Garnett J."/>
            <person name="Fosker N."/>
            <person name="Hall R."/>
            <person name="Garner P."/>
            <person name="Kelly D."/>
            <person name="Bird C."/>
            <person name="Palmer S."/>
            <person name="Gehring I."/>
            <person name="Berger A."/>
            <person name="Dooley C.M."/>
            <person name="Ersan-Urun Z."/>
            <person name="Eser C."/>
            <person name="Geiger H."/>
            <person name="Geisler M."/>
            <person name="Karotki L."/>
            <person name="Kirn A."/>
            <person name="Konantz J."/>
            <person name="Konantz M."/>
            <person name="Oberlander M."/>
            <person name="Rudolph-Geiger S."/>
            <person name="Teucke M."/>
            <person name="Lanz C."/>
            <person name="Raddatz G."/>
            <person name="Osoegawa K."/>
            <person name="Zhu B."/>
            <person name="Rapp A."/>
            <person name="Widaa S."/>
            <person name="Langford C."/>
            <person name="Yang F."/>
            <person name="Schuster S.C."/>
            <person name="Carter N.P."/>
            <person name="Harrow J."/>
            <person name="Ning Z."/>
            <person name="Herrero J."/>
            <person name="Searle S.M."/>
            <person name="Enright A."/>
            <person name="Geisler R."/>
            <person name="Plasterk R.H."/>
            <person name="Lee C."/>
            <person name="Westerfield M."/>
            <person name="de Jong P.J."/>
            <person name="Zon L.I."/>
            <person name="Postlethwait J.H."/>
            <person name="Nusslein-Volhard C."/>
            <person name="Hubbard T.J."/>
            <person name="Roest Crollius H."/>
            <person name="Rogers J."/>
            <person name="Stemple D.L."/>
        </authorList>
    </citation>
    <scope>NUCLEOTIDE SEQUENCE [LARGE SCALE GENOMIC DNA]</scope>
    <source>
        <strain>Tuebingen</strain>
    </source>
</reference>
<reference key="2">
    <citation type="submission" date="2003-10" db="EMBL/GenBank/DDBJ databases">
        <authorList>
            <consortium name="NIH - Zebrafish Gene Collection (ZGC) project"/>
        </authorList>
    </citation>
    <scope>NUCLEOTIDE SEQUENCE [LARGE SCALE MRNA]</scope>
    <source>
        <tissue>Eye</tissue>
    </source>
</reference>